<sequence>MASLTLEEIETMLDDMKKKLNVVNASVITSDSVSPAKHDDLIALHAHVMRSPSFSISEMDEIVQELGQLRGRKS</sequence>
<accession>Q5WFM7</accession>
<evidence type="ECO:0000255" key="1">
    <source>
        <dbReference type="HAMAP-Rule" id="MF_00829"/>
    </source>
</evidence>
<comment type="similarity">
    <text evidence="1">Belongs to the UPF0435 family.</text>
</comment>
<feature type="chain" id="PRO_0000291403" description="UPF0435 protein ABC2298">
    <location>
        <begin position="1"/>
        <end position="74"/>
    </location>
</feature>
<gene>
    <name type="ordered locus">ABC2298</name>
</gene>
<dbReference type="EMBL" id="AP006627">
    <property type="protein sequence ID" value="BAD64833.1"/>
    <property type="molecule type" value="Genomic_DNA"/>
</dbReference>
<dbReference type="RefSeq" id="WP_011247141.1">
    <property type="nucleotide sequence ID" value="NC_006582.1"/>
</dbReference>
<dbReference type="SMR" id="Q5WFM7"/>
<dbReference type="STRING" id="66692.ABC2298"/>
<dbReference type="DNASU" id="3204151"/>
<dbReference type="KEGG" id="bcl:ABC2298"/>
<dbReference type="HOGENOM" id="CLU_199533_1_0_9"/>
<dbReference type="OrthoDB" id="2361695at2"/>
<dbReference type="Proteomes" id="UP000001168">
    <property type="component" value="Chromosome"/>
</dbReference>
<dbReference type="HAMAP" id="MF_00829">
    <property type="entry name" value="UPF0435"/>
    <property type="match status" value="1"/>
</dbReference>
<dbReference type="InterPro" id="IPR009507">
    <property type="entry name" value="UPF0435"/>
</dbReference>
<dbReference type="Pfam" id="PF06569">
    <property type="entry name" value="DUF1128"/>
    <property type="match status" value="1"/>
</dbReference>
<keyword id="KW-1185">Reference proteome</keyword>
<protein>
    <recommendedName>
        <fullName evidence="1">UPF0435 protein ABC2298</fullName>
    </recommendedName>
</protein>
<reference key="1">
    <citation type="submission" date="2003-10" db="EMBL/GenBank/DDBJ databases">
        <title>The complete genome sequence of the alkaliphilic Bacillus clausii KSM-K16.</title>
        <authorList>
            <person name="Takaki Y."/>
            <person name="Kageyama Y."/>
            <person name="Shimamura S."/>
            <person name="Suzuki H."/>
            <person name="Nishi S."/>
            <person name="Hatada Y."/>
            <person name="Kawai S."/>
            <person name="Ito S."/>
            <person name="Horikoshi K."/>
        </authorList>
    </citation>
    <scope>NUCLEOTIDE SEQUENCE [LARGE SCALE GENOMIC DNA]</scope>
    <source>
        <strain>KSM-K16</strain>
    </source>
</reference>
<proteinExistence type="inferred from homology"/>
<organism>
    <name type="scientific">Shouchella clausii (strain KSM-K16)</name>
    <name type="common">Alkalihalobacillus clausii</name>
    <dbReference type="NCBI Taxonomy" id="66692"/>
    <lineage>
        <taxon>Bacteria</taxon>
        <taxon>Bacillati</taxon>
        <taxon>Bacillota</taxon>
        <taxon>Bacilli</taxon>
        <taxon>Bacillales</taxon>
        <taxon>Bacillaceae</taxon>
        <taxon>Shouchella</taxon>
    </lineage>
</organism>
<name>Y2298_SHOC1</name>